<keyword id="KW-0963">Cytoplasm</keyword>
<keyword id="KW-0489">Methyltransferase</keyword>
<keyword id="KW-1185">Reference proteome</keyword>
<keyword id="KW-0949">S-adenosyl-L-methionine</keyword>
<keyword id="KW-0808">Transferase</keyword>
<gene>
    <name evidence="1" type="primary">pcm</name>
    <name type="ordered locus">MXAN_3407</name>
</gene>
<evidence type="ECO:0000255" key="1">
    <source>
        <dbReference type="HAMAP-Rule" id="MF_00090"/>
    </source>
</evidence>
<sequence length="212" mass="22929">MGDWGRADYLSRHGIKDARVLEAIARLNRADFVPEDLREEASADSPLPIGHGQTISQPYVVALMTEALQLQGDERVLEIGTGSGYQTALLSLLCREVYSVEIVPELAQSAREVLGRQGFENVSFREGDGSLGWPDQAPFDAILAAAAPPDVPLQLLSQLKPGGRMIIPVGPRGGTQQLLRIQRALRPGEVPQVESLLSVRFVPMTGQPLSQG</sequence>
<proteinExistence type="inferred from homology"/>
<dbReference type="EC" id="2.1.1.77" evidence="1"/>
<dbReference type="EMBL" id="CP000113">
    <property type="protein sequence ID" value="ABF91639.1"/>
    <property type="molecule type" value="Genomic_DNA"/>
</dbReference>
<dbReference type="RefSeq" id="WP_011553440.1">
    <property type="nucleotide sequence ID" value="NC_008095.1"/>
</dbReference>
<dbReference type="SMR" id="Q1D6W9"/>
<dbReference type="STRING" id="246197.MXAN_3407"/>
<dbReference type="EnsemblBacteria" id="ABF91639">
    <property type="protein sequence ID" value="ABF91639"/>
    <property type="gene ID" value="MXAN_3407"/>
</dbReference>
<dbReference type="GeneID" id="41360754"/>
<dbReference type="KEGG" id="mxa:MXAN_3407"/>
<dbReference type="eggNOG" id="COG2518">
    <property type="taxonomic scope" value="Bacteria"/>
</dbReference>
<dbReference type="HOGENOM" id="CLU_055432_2_0_7"/>
<dbReference type="OrthoDB" id="9810066at2"/>
<dbReference type="Proteomes" id="UP000002402">
    <property type="component" value="Chromosome"/>
</dbReference>
<dbReference type="GO" id="GO:0005737">
    <property type="term" value="C:cytoplasm"/>
    <property type="evidence" value="ECO:0007669"/>
    <property type="project" value="UniProtKB-SubCell"/>
</dbReference>
<dbReference type="GO" id="GO:0004719">
    <property type="term" value="F:protein-L-isoaspartate (D-aspartate) O-methyltransferase activity"/>
    <property type="evidence" value="ECO:0007669"/>
    <property type="project" value="UniProtKB-UniRule"/>
</dbReference>
<dbReference type="GO" id="GO:0032259">
    <property type="term" value="P:methylation"/>
    <property type="evidence" value="ECO:0007669"/>
    <property type="project" value="UniProtKB-KW"/>
</dbReference>
<dbReference type="GO" id="GO:0036211">
    <property type="term" value="P:protein modification process"/>
    <property type="evidence" value="ECO:0007669"/>
    <property type="project" value="UniProtKB-UniRule"/>
</dbReference>
<dbReference type="GO" id="GO:0030091">
    <property type="term" value="P:protein repair"/>
    <property type="evidence" value="ECO:0007669"/>
    <property type="project" value="UniProtKB-UniRule"/>
</dbReference>
<dbReference type="CDD" id="cd02440">
    <property type="entry name" value="AdoMet_MTases"/>
    <property type="match status" value="1"/>
</dbReference>
<dbReference type="FunFam" id="3.40.50.150:FF:000010">
    <property type="entry name" value="Protein-L-isoaspartate O-methyltransferase"/>
    <property type="match status" value="1"/>
</dbReference>
<dbReference type="Gene3D" id="3.40.50.150">
    <property type="entry name" value="Vaccinia Virus protein VP39"/>
    <property type="match status" value="1"/>
</dbReference>
<dbReference type="HAMAP" id="MF_00090">
    <property type="entry name" value="PIMT"/>
    <property type="match status" value="1"/>
</dbReference>
<dbReference type="InterPro" id="IPR000682">
    <property type="entry name" value="PCMT"/>
</dbReference>
<dbReference type="InterPro" id="IPR029063">
    <property type="entry name" value="SAM-dependent_MTases_sf"/>
</dbReference>
<dbReference type="NCBIfam" id="TIGR00080">
    <property type="entry name" value="pimt"/>
    <property type="match status" value="1"/>
</dbReference>
<dbReference type="NCBIfam" id="NF001453">
    <property type="entry name" value="PRK00312.1"/>
    <property type="match status" value="1"/>
</dbReference>
<dbReference type="PANTHER" id="PTHR11579">
    <property type="entry name" value="PROTEIN-L-ISOASPARTATE O-METHYLTRANSFERASE"/>
    <property type="match status" value="1"/>
</dbReference>
<dbReference type="PANTHER" id="PTHR11579:SF0">
    <property type="entry name" value="PROTEIN-L-ISOASPARTATE(D-ASPARTATE) O-METHYLTRANSFERASE"/>
    <property type="match status" value="1"/>
</dbReference>
<dbReference type="Pfam" id="PF01135">
    <property type="entry name" value="PCMT"/>
    <property type="match status" value="1"/>
</dbReference>
<dbReference type="SUPFAM" id="SSF53335">
    <property type="entry name" value="S-adenosyl-L-methionine-dependent methyltransferases"/>
    <property type="match status" value="1"/>
</dbReference>
<dbReference type="PROSITE" id="PS01279">
    <property type="entry name" value="PCMT"/>
    <property type="match status" value="1"/>
</dbReference>
<organism>
    <name type="scientific">Myxococcus xanthus (strain DK1622)</name>
    <dbReference type="NCBI Taxonomy" id="246197"/>
    <lineage>
        <taxon>Bacteria</taxon>
        <taxon>Pseudomonadati</taxon>
        <taxon>Myxococcota</taxon>
        <taxon>Myxococcia</taxon>
        <taxon>Myxococcales</taxon>
        <taxon>Cystobacterineae</taxon>
        <taxon>Myxococcaceae</taxon>
        <taxon>Myxococcus</taxon>
    </lineage>
</organism>
<protein>
    <recommendedName>
        <fullName evidence="1">Protein-L-isoaspartate O-methyltransferase</fullName>
        <ecNumber evidence="1">2.1.1.77</ecNumber>
    </recommendedName>
    <alternativeName>
        <fullName evidence="1">L-isoaspartyl protein carboxyl methyltransferase</fullName>
    </alternativeName>
    <alternativeName>
        <fullName evidence="1">Protein L-isoaspartyl methyltransferase</fullName>
    </alternativeName>
    <alternativeName>
        <fullName evidence="1">Protein-beta-aspartate methyltransferase</fullName>
        <shortName evidence="1">PIMT</shortName>
    </alternativeName>
</protein>
<comment type="function">
    <text evidence="1">Catalyzes the methyl esterification of L-isoaspartyl residues in peptides and proteins that result from spontaneous decomposition of normal L-aspartyl and L-asparaginyl residues. It plays a role in the repair and/or degradation of damaged proteins.</text>
</comment>
<comment type="catalytic activity">
    <reaction evidence="1">
        <text>[protein]-L-isoaspartate + S-adenosyl-L-methionine = [protein]-L-isoaspartate alpha-methyl ester + S-adenosyl-L-homocysteine</text>
        <dbReference type="Rhea" id="RHEA:12705"/>
        <dbReference type="Rhea" id="RHEA-COMP:12143"/>
        <dbReference type="Rhea" id="RHEA-COMP:12144"/>
        <dbReference type="ChEBI" id="CHEBI:57856"/>
        <dbReference type="ChEBI" id="CHEBI:59789"/>
        <dbReference type="ChEBI" id="CHEBI:90596"/>
        <dbReference type="ChEBI" id="CHEBI:90598"/>
        <dbReference type="EC" id="2.1.1.77"/>
    </reaction>
</comment>
<comment type="subcellular location">
    <subcellularLocation>
        <location evidence="1">Cytoplasm</location>
    </subcellularLocation>
</comment>
<comment type="similarity">
    <text evidence="1">Belongs to the methyltransferase superfamily. L-isoaspartyl/D-aspartyl protein methyltransferase family.</text>
</comment>
<accession>Q1D6W9</accession>
<feature type="chain" id="PRO_0000351882" description="Protein-L-isoaspartate O-methyltransferase">
    <location>
        <begin position="1"/>
        <end position="212"/>
    </location>
</feature>
<feature type="active site" evidence="1">
    <location>
        <position position="56"/>
    </location>
</feature>
<name>PIMT_MYXXD</name>
<reference key="1">
    <citation type="journal article" date="2006" name="Proc. Natl. Acad. Sci. U.S.A.">
        <title>Evolution of sensory complexity recorded in a myxobacterial genome.</title>
        <authorList>
            <person name="Goldman B.S."/>
            <person name="Nierman W.C."/>
            <person name="Kaiser D."/>
            <person name="Slater S.C."/>
            <person name="Durkin A.S."/>
            <person name="Eisen J.A."/>
            <person name="Ronning C.M."/>
            <person name="Barbazuk W.B."/>
            <person name="Blanchard M."/>
            <person name="Field C."/>
            <person name="Halling C."/>
            <person name="Hinkle G."/>
            <person name="Iartchuk O."/>
            <person name="Kim H.S."/>
            <person name="Mackenzie C."/>
            <person name="Madupu R."/>
            <person name="Miller N."/>
            <person name="Shvartsbeyn A."/>
            <person name="Sullivan S.A."/>
            <person name="Vaudin M."/>
            <person name="Wiegand R."/>
            <person name="Kaplan H.B."/>
        </authorList>
    </citation>
    <scope>NUCLEOTIDE SEQUENCE [LARGE SCALE GENOMIC DNA]</scope>
    <source>
        <strain>DK1622</strain>
    </source>
</reference>